<feature type="chain" id="PRO_1000054853" description="Small ribosomal subunit protein uS15">
    <location>
        <begin position="1"/>
        <end position="89"/>
    </location>
</feature>
<proteinExistence type="inferred from homology"/>
<evidence type="ECO:0000255" key="1">
    <source>
        <dbReference type="HAMAP-Rule" id="MF_01343"/>
    </source>
</evidence>
<evidence type="ECO:0000305" key="2"/>
<name>RS15_CUPNH</name>
<keyword id="KW-1185">Reference proteome</keyword>
<keyword id="KW-0687">Ribonucleoprotein</keyword>
<keyword id="KW-0689">Ribosomal protein</keyword>
<keyword id="KW-0694">RNA-binding</keyword>
<keyword id="KW-0699">rRNA-binding</keyword>
<comment type="function">
    <text evidence="1">One of the primary rRNA binding proteins, it binds directly to 16S rRNA where it helps nucleate assembly of the platform of the 30S subunit by binding and bridging several RNA helices of the 16S rRNA.</text>
</comment>
<comment type="function">
    <text evidence="1">Forms an intersubunit bridge (bridge B4) with the 23S rRNA of the 50S subunit in the ribosome.</text>
</comment>
<comment type="subunit">
    <text evidence="1">Part of the 30S ribosomal subunit. Forms a bridge to the 50S subunit in the 70S ribosome, contacting the 23S rRNA.</text>
</comment>
<comment type="similarity">
    <text evidence="1">Belongs to the universal ribosomal protein uS15 family.</text>
</comment>
<dbReference type="EMBL" id="AM260479">
    <property type="protein sequence ID" value="CAJ92186.1"/>
    <property type="molecule type" value="Genomic_DNA"/>
</dbReference>
<dbReference type="RefSeq" id="WP_010809136.1">
    <property type="nucleotide sequence ID" value="NZ_CP039287.1"/>
</dbReference>
<dbReference type="SMR" id="Q0KCT5"/>
<dbReference type="STRING" id="381666.H16_A1044"/>
<dbReference type="GeneID" id="34311432"/>
<dbReference type="KEGG" id="reh:H16_A1044"/>
<dbReference type="eggNOG" id="COG0184">
    <property type="taxonomic scope" value="Bacteria"/>
</dbReference>
<dbReference type="HOGENOM" id="CLU_148518_0_0_4"/>
<dbReference type="OrthoDB" id="9799262at2"/>
<dbReference type="Proteomes" id="UP000008210">
    <property type="component" value="Chromosome 1"/>
</dbReference>
<dbReference type="GO" id="GO:0022627">
    <property type="term" value="C:cytosolic small ribosomal subunit"/>
    <property type="evidence" value="ECO:0007669"/>
    <property type="project" value="TreeGrafter"/>
</dbReference>
<dbReference type="GO" id="GO:0019843">
    <property type="term" value="F:rRNA binding"/>
    <property type="evidence" value="ECO:0007669"/>
    <property type="project" value="UniProtKB-UniRule"/>
</dbReference>
<dbReference type="GO" id="GO:0003735">
    <property type="term" value="F:structural constituent of ribosome"/>
    <property type="evidence" value="ECO:0007669"/>
    <property type="project" value="InterPro"/>
</dbReference>
<dbReference type="GO" id="GO:0006412">
    <property type="term" value="P:translation"/>
    <property type="evidence" value="ECO:0007669"/>
    <property type="project" value="UniProtKB-UniRule"/>
</dbReference>
<dbReference type="CDD" id="cd00353">
    <property type="entry name" value="Ribosomal_S15p_S13e"/>
    <property type="match status" value="1"/>
</dbReference>
<dbReference type="FunFam" id="1.10.287.10:FF:000002">
    <property type="entry name" value="30S ribosomal protein S15"/>
    <property type="match status" value="1"/>
</dbReference>
<dbReference type="Gene3D" id="6.10.250.3130">
    <property type="match status" value="1"/>
</dbReference>
<dbReference type="Gene3D" id="1.10.287.10">
    <property type="entry name" value="S15/NS1, RNA-binding"/>
    <property type="match status" value="1"/>
</dbReference>
<dbReference type="HAMAP" id="MF_01343_B">
    <property type="entry name" value="Ribosomal_uS15_B"/>
    <property type="match status" value="1"/>
</dbReference>
<dbReference type="InterPro" id="IPR000589">
    <property type="entry name" value="Ribosomal_uS15"/>
</dbReference>
<dbReference type="InterPro" id="IPR005290">
    <property type="entry name" value="Ribosomal_uS15_bac-type"/>
</dbReference>
<dbReference type="InterPro" id="IPR009068">
    <property type="entry name" value="uS15_NS1_RNA-bd_sf"/>
</dbReference>
<dbReference type="NCBIfam" id="TIGR00952">
    <property type="entry name" value="S15_bact"/>
    <property type="match status" value="1"/>
</dbReference>
<dbReference type="PANTHER" id="PTHR23321">
    <property type="entry name" value="RIBOSOMAL PROTEIN S15, BACTERIAL AND ORGANELLAR"/>
    <property type="match status" value="1"/>
</dbReference>
<dbReference type="PANTHER" id="PTHR23321:SF26">
    <property type="entry name" value="SMALL RIBOSOMAL SUBUNIT PROTEIN US15M"/>
    <property type="match status" value="1"/>
</dbReference>
<dbReference type="Pfam" id="PF00312">
    <property type="entry name" value="Ribosomal_S15"/>
    <property type="match status" value="1"/>
</dbReference>
<dbReference type="SMART" id="SM01387">
    <property type="entry name" value="Ribosomal_S15"/>
    <property type="match status" value="1"/>
</dbReference>
<dbReference type="SUPFAM" id="SSF47060">
    <property type="entry name" value="S15/NS1 RNA-binding domain"/>
    <property type="match status" value="1"/>
</dbReference>
<dbReference type="PROSITE" id="PS00362">
    <property type="entry name" value="RIBOSOMAL_S15"/>
    <property type="match status" value="1"/>
</dbReference>
<organism>
    <name type="scientific">Cupriavidus necator (strain ATCC 17699 / DSM 428 / KCTC 22496 / NCIMB 10442 / H16 / Stanier 337)</name>
    <name type="common">Ralstonia eutropha</name>
    <dbReference type="NCBI Taxonomy" id="381666"/>
    <lineage>
        <taxon>Bacteria</taxon>
        <taxon>Pseudomonadati</taxon>
        <taxon>Pseudomonadota</taxon>
        <taxon>Betaproteobacteria</taxon>
        <taxon>Burkholderiales</taxon>
        <taxon>Burkholderiaceae</taxon>
        <taxon>Cupriavidus</taxon>
    </lineage>
</organism>
<sequence length="89" mass="10273">MAVADINKSEVIKQFARGANDTGSPEVQVALLTTRINELTPHFKANMKDHHSRRGLLRMVSRRRRLLDYLKSNDADRYRALIEKLGLRK</sequence>
<gene>
    <name evidence="1" type="primary">rpsO</name>
    <name type="ordered locus">H16_A1044</name>
</gene>
<reference key="1">
    <citation type="journal article" date="2006" name="Nat. Biotechnol.">
        <title>Genome sequence of the bioplastic-producing 'Knallgas' bacterium Ralstonia eutropha H16.</title>
        <authorList>
            <person name="Pohlmann A."/>
            <person name="Fricke W.F."/>
            <person name="Reinecke F."/>
            <person name="Kusian B."/>
            <person name="Liesegang H."/>
            <person name="Cramm R."/>
            <person name="Eitinger T."/>
            <person name="Ewering C."/>
            <person name="Poetter M."/>
            <person name="Schwartz E."/>
            <person name="Strittmatter A."/>
            <person name="Voss I."/>
            <person name="Gottschalk G."/>
            <person name="Steinbuechel A."/>
            <person name="Friedrich B."/>
            <person name="Bowien B."/>
        </authorList>
    </citation>
    <scope>NUCLEOTIDE SEQUENCE [LARGE SCALE GENOMIC DNA]</scope>
    <source>
        <strain>ATCC 17699 / DSM 428 / KCTC 22496 / NCIMB 10442 / H16 / Stanier 337</strain>
    </source>
</reference>
<protein>
    <recommendedName>
        <fullName evidence="1">Small ribosomal subunit protein uS15</fullName>
    </recommendedName>
    <alternativeName>
        <fullName evidence="2">30S ribosomal protein S15</fullName>
    </alternativeName>
</protein>
<accession>Q0KCT5</accession>